<protein>
    <recommendedName>
        <fullName>tRNA (cytosine(48)-C(5))-methyltransferase</fullName>
        <ecNumber evidence="2">2.1.1.-</ecNumber>
    </recommendedName>
    <alternativeName>
        <fullName>aTrm4</fullName>
    </alternativeName>
    <alternativeName>
        <fullName>tRNA (cytosine-5-)-methyltransferase Trm4</fullName>
    </alternativeName>
</protein>
<feature type="chain" id="PRO_0000211821" description="tRNA (cytosine(48)-C(5))-methyltransferase">
    <location>
        <begin position="1"/>
        <end position="274"/>
    </location>
</feature>
<feature type="active site" description="Nucleophile" evidence="3">
    <location>
        <position position="212"/>
    </location>
</feature>
<feature type="binding site">
    <location>
        <begin position="91"/>
        <end position="97"/>
    </location>
    <ligand>
        <name>S-adenosyl-L-methionine</name>
        <dbReference type="ChEBI" id="CHEBI:59789"/>
    </ligand>
</feature>
<feature type="binding site">
    <location>
        <position position="115"/>
    </location>
    <ligand>
        <name>S-adenosyl-L-methionine</name>
        <dbReference type="ChEBI" id="CHEBI:59789"/>
    </ligand>
</feature>
<feature type="binding site">
    <location>
        <position position="120"/>
    </location>
    <ligand>
        <name>S-adenosyl-L-methionine</name>
        <dbReference type="ChEBI" id="CHEBI:59789"/>
    </ligand>
</feature>
<feature type="binding site">
    <location>
        <position position="142"/>
    </location>
    <ligand>
        <name>S-adenosyl-L-methionine</name>
        <dbReference type="ChEBI" id="CHEBI:59789"/>
    </ligand>
</feature>
<feature type="binding site">
    <location>
        <position position="163"/>
    </location>
    <ligand>
        <name>S-adenosyl-L-methionine</name>
        <dbReference type="ChEBI" id="CHEBI:59789"/>
    </ligand>
</feature>
<feature type="binding site">
    <location>
        <position position="169"/>
    </location>
    <ligand>
        <name>S-adenosyl-L-methionine</name>
        <dbReference type="ChEBI" id="CHEBI:59789"/>
    </ligand>
</feature>
<feature type="binding site">
    <location>
        <position position="189"/>
    </location>
    <ligand>
        <name>S-adenosyl-L-methionine</name>
        <dbReference type="ChEBI" id="CHEBI:59789"/>
    </ligand>
</feature>
<feature type="strand" evidence="6">
    <location>
        <begin position="11"/>
        <end position="15"/>
    </location>
</feature>
<feature type="turn" evidence="6">
    <location>
        <begin position="17"/>
        <end position="19"/>
    </location>
</feature>
<feature type="helix" evidence="6">
    <location>
        <begin position="22"/>
        <end position="30"/>
    </location>
</feature>
<feature type="turn" evidence="6">
    <location>
        <begin position="31"/>
        <end position="33"/>
    </location>
</feature>
<feature type="strand" evidence="6">
    <location>
        <begin position="35"/>
        <end position="38"/>
    </location>
</feature>
<feature type="strand" evidence="6">
    <location>
        <begin position="44"/>
        <end position="49"/>
    </location>
</feature>
<feature type="helix" evidence="6">
    <location>
        <begin position="58"/>
        <end position="61"/>
    </location>
</feature>
<feature type="strand" evidence="6">
    <location>
        <begin position="64"/>
        <end position="67"/>
    </location>
</feature>
<feature type="helix" evidence="6">
    <location>
        <begin position="71"/>
        <end position="73"/>
    </location>
</feature>
<feature type="helix" evidence="6">
    <location>
        <begin position="74"/>
        <end position="79"/>
    </location>
</feature>
<feature type="strand" evidence="6">
    <location>
        <begin position="86"/>
        <end position="89"/>
    </location>
</feature>
<feature type="helix" evidence="6">
    <location>
        <begin position="96"/>
        <end position="104"/>
    </location>
</feature>
<feature type="turn" evidence="6">
    <location>
        <begin position="105"/>
        <end position="107"/>
    </location>
</feature>
<feature type="strand" evidence="6">
    <location>
        <begin position="109"/>
        <end position="116"/>
    </location>
</feature>
<feature type="helix" evidence="6">
    <location>
        <begin position="118"/>
        <end position="130"/>
    </location>
</feature>
<feature type="strand" evidence="6">
    <location>
        <begin position="135"/>
        <end position="141"/>
    </location>
</feature>
<feature type="helix" evidence="6">
    <location>
        <begin position="143"/>
        <end position="152"/>
    </location>
</feature>
<feature type="strand" evidence="6">
    <location>
        <begin position="157"/>
        <end position="164"/>
    </location>
</feature>
<feature type="helix" evidence="5">
    <location>
        <begin position="167"/>
        <end position="169"/>
    </location>
</feature>
<feature type="helix" evidence="6">
    <location>
        <begin position="180"/>
        <end position="183"/>
    </location>
</feature>
<feature type="helix" evidence="6">
    <location>
        <begin position="185"/>
        <end position="187"/>
    </location>
</feature>
<feature type="helix" evidence="6">
    <location>
        <begin position="190"/>
        <end position="200"/>
    </location>
</feature>
<feature type="strand" evidence="6">
    <location>
        <begin position="201"/>
        <end position="212"/>
    </location>
</feature>
<feature type="helix" evidence="5">
    <location>
        <begin position="216"/>
        <end position="218"/>
    </location>
</feature>
<feature type="helix" evidence="6">
    <location>
        <begin position="220"/>
        <end position="229"/>
    </location>
</feature>
<feature type="strand" evidence="6">
    <location>
        <begin position="231"/>
        <end position="236"/>
    </location>
</feature>
<feature type="strand" evidence="6">
    <location>
        <begin position="248"/>
        <end position="250"/>
    </location>
</feature>
<feature type="strand" evidence="6">
    <location>
        <begin position="257"/>
        <end position="259"/>
    </location>
</feature>
<feature type="strand" evidence="6">
    <location>
        <begin position="266"/>
        <end position="273"/>
    </location>
</feature>
<name>TRM4_METJA</name>
<gene>
    <name type="primary">trm4</name>
    <name type="ordered locus">MJ0026</name>
</gene>
<keyword id="KW-0002">3D-structure</keyword>
<keyword id="KW-0963">Cytoplasm</keyword>
<keyword id="KW-0489">Methyltransferase</keyword>
<keyword id="KW-1185">Reference proteome</keyword>
<keyword id="KW-0694">RNA-binding</keyword>
<keyword id="KW-0949">S-adenosyl-L-methionine</keyword>
<keyword id="KW-0808">Transferase</keyword>
<keyword id="KW-0819">tRNA processing</keyword>
<comment type="function">
    <text evidence="2">Catalyzes AdoMet-dependent formation of m5C in tRNA. Cytidine residue at either position 40 or position 48 is likely to be methylated.</text>
</comment>
<comment type="catalytic activity">
    <reaction evidence="4">
        <text>cytidine(48) in tRNA precursor + S-adenosyl-L-methionine = 5-methylcytidine(48) in tRNA precursor + S-adenosyl-L-homocysteine + H(+)</text>
        <dbReference type="Rhea" id="RHEA:54136"/>
        <dbReference type="Rhea" id="RHEA-COMP:13806"/>
        <dbReference type="Rhea" id="RHEA-COMP:13807"/>
        <dbReference type="ChEBI" id="CHEBI:15378"/>
        <dbReference type="ChEBI" id="CHEBI:57856"/>
        <dbReference type="ChEBI" id="CHEBI:59789"/>
        <dbReference type="ChEBI" id="CHEBI:74483"/>
        <dbReference type="ChEBI" id="CHEBI:82748"/>
    </reaction>
</comment>
<comment type="catalytic activity">
    <reaction evidence="4">
        <text>cytidine(40) in tRNA precursor + S-adenosyl-L-methionine = 5-methylcytidine(40) in tRNA precursor + S-adenosyl-L-homocysteine + H(+)</text>
        <dbReference type="Rhea" id="RHEA:42944"/>
        <dbReference type="Rhea" id="RHEA-COMP:10292"/>
        <dbReference type="Rhea" id="RHEA-COMP:10296"/>
        <dbReference type="ChEBI" id="CHEBI:15378"/>
        <dbReference type="ChEBI" id="CHEBI:57856"/>
        <dbReference type="ChEBI" id="CHEBI:59789"/>
        <dbReference type="ChEBI" id="CHEBI:74483"/>
        <dbReference type="ChEBI" id="CHEBI:82748"/>
    </reaction>
</comment>
<comment type="subcellular location">
    <subcellularLocation>
        <location evidence="3">Cytoplasm</location>
    </subcellularLocation>
</comment>
<comment type="similarity">
    <text evidence="1">Belongs to the class I-like SAM-binding methyltransferase superfamily. RsmB/NOP family.</text>
</comment>
<sequence length="274" mass="31490">MMIVYKGEKMQFIRVNTLKINPEVLKKRLENKGVVLEKTFLDYAFEVKKSPFSIGSTPEYLFGYYMPQSISSMIPPIVLNPREDDFILDMCAAPGGKTTHLAQLMKNKGTIVAVEISKTRTKALKSNINRMGVLNTIIINADMRKYKDYLLKNEIFFDKILLDAPCSGNIIKDKNRNVSEEDIKYCSLRQKELIDIGIDLLKKDGELVYSTCSMEVEENEEVIKYILQKRNDVELIIIKANEFKGINIKEGYIKGTLRVFPPNEPFFIAKLRKI</sequence>
<reference key="1">
    <citation type="journal article" date="1996" name="Science">
        <title>Complete genome sequence of the methanogenic archaeon, Methanococcus jannaschii.</title>
        <authorList>
            <person name="Bult C.J."/>
            <person name="White O."/>
            <person name="Olsen G.J."/>
            <person name="Zhou L."/>
            <person name="Fleischmann R.D."/>
            <person name="Sutton G.G."/>
            <person name="Blake J.A."/>
            <person name="FitzGerald L.M."/>
            <person name="Clayton R.A."/>
            <person name="Gocayne J.D."/>
            <person name="Kerlavage A.R."/>
            <person name="Dougherty B.A."/>
            <person name="Tomb J.-F."/>
            <person name="Adams M.D."/>
            <person name="Reich C.I."/>
            <person name="Overbeek R."/>
            <person name="Kirkness E.F."/>
            <person name="Weinstock K.G."/>
            <person name="Merrick J.M."/>
            <person name="Glodek A."/>
            <person name="Scott J.L."/>
            <person name="Geoghagen N.S.M."/>
            <person name="Weidman J.F."/>
            <person name="Fuhrmann J.L."/>
            <person name="Nguyen D."/>
            <person name="Utterback T.R."/>
            <person name="Kelley J.M."/>
            <person name="Peterson J.D."/>
            <person name="Sadow P.W."/>
            <person name="Hanna M.C."/>
            <person name="Cotton M.D."/>
            <person name="Roberts K.M."/>
            <person name="Hurst M.A."/>
            <person name="Kaine B.P."/>
            <person name="Borodovsky M."/>
            <person name="Klenk H.-P."/>
            <person name="Fraser C.M."/>
            <person name="Smith H.O."/>
            <person name="Woese C.R."/>
            <person name="Venter J.C."/>
        </authorList>
    </citation>
    <scope>NUCLEOTIDE SEQUENCE [LARGE SCALE GENOMIC DNA]</scope>
    <source>
        <strain>ATCC 43067 / DSM 2661 / JAL-1 / JCM 10045 / NBRC 100440</strain>
    </source>
</reference>
<reference key="2">
    <citation type="journal article" date="2010" name="J. Mol. Biol.">
        <title>Crystal structure of Methanocaldococcus jannaschii Trm4 complexed with sinefungin.</title>
        <authorList>
            <person name="Kuratani M."/>
            <person name="Hirano M."/>
            <person name="Goto-Ito S."/>
            <person name="Itoh Y."/>
            <person name="Hikida Y."/>
            <person name="Nishimoto M."/>
            <person name="Sekine S."/>
            <person name="Bessho Y."/>
            <person name="Ito T."/>
            <person name="Grosjean H."/>
            <person name="Yokoyama S."/>
        </authorList>
    </citation>
    <scope>X-RAY CRYSTALLOGRAPHY (1.27 ANGSTROMS) IN COMPLEX WITH SINEFUNGIN</scope>
    <scope>FUNCTION</scope>
    <scope>CATALYTIC ACTIVITY</scope>
</reference>
<dbReference type="EC" id="2.1.1.-" evidence="2"/>
<dbReference type="EMBL" id="L77117">
    <property type="protein sequence ID" value="AAB98007.1"/>
    <property type="molecule type" value="Genomic_DNA"/>
</dbReference>
<dbReference type="PIR" id="B64303">
    <property type="entry name" value="B64303"/>
</dbReference>
<dbReference type="PDB" id="3A4T">
    <property type="method" value="X-ray"/>
    <property type="resolution" value="2.30 A"/>
    <property type="chains" value="A/B=1-274"/>
</dbReference>
<dbReference type="PDB" id="3AJD">
    <property type="method" value="X-ray"/>
    <property type="resolution" value="1.27 A"/>
    <property type="chains" value="A=1-274"/>
</dbReference>
<dbReference type="PDBsum" id="3A4T"/>
<dbReference type="PDBsum" id="3AJD"/>
<dbReference type="SMR" id="Q60343"/>
<dbReference type="FunCoup" id="Q60343">
    <property type="interactions" value="83"/>
</dbReference>
<dbReference type="STRING" id="243232.MJ_0026"/>
<dbReference type="PaxDb" id="243232-MJ_0026"/>
<dbReference type="EnsemblBacteria" id="AAB98007">
    <property type="protein sequence ID" value="AAB98007"/>
    <property type="gene ID" value="MJ_0026"/>
</dbReference>
<dbReference type="KEGG" id="mja:MJ_0026"/>
<dbReference type="eggNOG" id="arCOG00973">
    <property type="taxonomic scope" value="Archaea"/>
</dbReference>
<dbReference type="HOGENOM" id="CLU_005316_7_0_2"/>
<dbReference type="InParanoid" id="Q60343"/>
<dbReference type="PhylomeDB" id="Q60343"/>
<dbReference type="EvolutionaryTrace" id="Q60343"/>
<dbReference type="Proteomes" id="UP000000805">
    <property type="component" value="Chromosome"/>
</dbReference>
<dbReference type="GO" id="GO:0005737">
    <property type="term" value="C:cytoplasm"/>
    <property type="evidence" value="ECO:0007669"/>
    <property type="project" value="UniProtKB-SubCell"/>
</dbReference>
<dbReference type="GO" id="GO:0003723">
    <property type="term" value="F:RNA binding"/>
    <property type="evidence" value="ECO:0007669"/>
    <property type="project" value="UniProtKB-KW"/>
</dbReference>
<dbReference type="GO" id="GO:0016428">
    <property type="term" value="F:tRNA (cytidine-5-)-methyltransferase activity"/>
    <property type="evidence" value="ECO:0000314"/>
    <property type="project" value="UniProtKB"/>
</dbReference>
<dbReference type="GO" id="GO:0030488">
    <property type="term" value="P:tRNA methylation"/>
    <property type="evidence" value="ECO:0000314"/>
    <property type="project" value="UniProtKB"/>
</dbReference>
<dbReference type="CDD" id="cd02440">
    <property type="entry name" value="AdoMet_MTases"/>
    <property type="match status" value="1"/>
</dbReference>
<dbReference type="Gene3D" id="3.30.70.1170">
    <property type="entry name" value="Sun protein, domain 3"/>
    <property type="match status" value="1"/>
</dbReference>
<dbReference type="Gene3D" id="3.40.50.150">
    <property type="entry name" value="Vaccinia Virus protein VP39"/>
    <property type="match status" value="1"/>
</dbReference>
<dbReference type="InterPro" id="IPR049560">
    <property type="entry name" value="MeTrfase_RsmB-F_NOP2_cat"/>
</dbReference>
<dbReference type="InterPro" id="IPR001678">
    <property type="entry name" value="MeTrfase_RsmB-F_NOP2_dom"/>
</dbReference>
<dbReference type="InterPro" id="IPR011023">
    <property type="entry name" value="Nop2p"/>
</dbReference>
<dbReference type="InterPro" id="IPR023267">
    <property type="entry name" value="RCMT"/>
</dbReference>
<dbReference type="InterPro" id="IPR018314">
    <property type="entry name" value="RsmB/NOL1/NOP2-like_CS"/>
</dbReference>
<dbReference type="InterPro" id="IPR029063">
    <property type="entry name" value="SAM-dependent_MTases_sf"/>
</dbReference>
<dbReference type="NCBIfam" id="TIGR00446">
    <property type="entry name" value="nop2p"/>
    <property type="match status" value="1"/>
</dbReference>
<dbReference type="PANTHER" id="PTHR22807">
    <property type="entry name" value="NOP2 YEAST -RELATED NOL1/NOP2/FMU SUN DOMAIN-CONTAINING"/>
    <property type="match status" value="1"/>
</dbReference>
<dbReference type="PANTHER" id="PTHR22807:SF74">
    <property type="entry name" value="TRNA (CYTOSINE(48)-C(5))-METHYLTRANSFERASE"/>
    <property type="match status" value="1"/>
</dbReference>
<dbReference type="Pfam" id="PF01189">
    <property type="entry name" value="Methyltr_RsmB-F"/>
    <property type="match status" value="1"/>
</dbReference>
<dbReference type="PRINTS" id="PR02008">
    <property type="entry name" value="RCMTFAMILY"/>
</dbReference>
<dbReference type="SUPFAM" id="SSF53335">
    <property type="entry name" value="S-adenosyl-L-methionine-dependent methyltransferases"/>
    <property type="match status" value="1"/>
</dbReference>
<dbReference type="PROSITE" id="PS01153">
    <property type="entry name" value="NOL1_NOP2_SUN"/>
    <property type="match status" value="1"/>
</dbReference>
<dbReference type="PROSITE" id="PS51686">
    <property type="entry name" value="SAM_MT_RSMB_NOP"/>
    <property type="match status" value="1"/>
</dbReference>
<accession>Q60343</accession>
<organism>
    <name type="scientific">Methanocaldococcus jannaschii (strain ATCC 43067 / DSM 2661 / JAL-1 / JCM 10045 / NBRC 100440)</name>
    <name type="common">Methanococcus jannaschii</name>
    <dbReference type="NCBI Taxonomy" id="243232"/>
    <lineage>
        <taxon>Archaea</taxon>
        <taxon>Methanobacteriati</taxon>
        <taxon>Methanobacteriota</taxon>
        <taxon>Methanomada group</taxon>
        <taxon>Methanococci</taxon>
        <taxon>Methanococcales</taxon>
        <taxon>Methanocaldococcaceae</taxon>
        <taxon>Methanocaldococcus</taxon>
    </lineage>
</organism>
<proteinExistence type="evidence at protein level"/>
<evidence type="ECO:0000255" key="1">
    <source>
        <dbReference type="PROSITE-ProRule" id="PRU01023"/>
    </source>
</evidence>
<evidence type="ECO:0000269" key="2">
    <source>
    </source>
</evidence>
<evidence type="ECO:0000305" key="3"/>
<evidence type="ECO:0000305" key="4">
    <source>
    </source>
</evidence>
<evidence type="ECO:0007829" key="5">
    <source>
        <dbReference type="PDB" id="3A4T"/>
    </source>
</evidence>
<evidence type="ECO:0007829" key="6">
    <source>
        <dbReference type="PDB" id="3AJD"/>
    </source>
</evidence>